<protein>
    <recommendedName>
        <fullName evidence="1">Guanylate kinase</fullName>
        <ecNumber evidence="1">2.7.4.8</ecNumber>
    </recommendedName>
    <alternativeName>
        <fullName evidence="1">GMP kinase</fullName>
    </alternativeName>
</protein>
<reference key="1">
    <citation type="journal article" date="2007" name="Proc. Natl. Acad. Sci. U.S.A.">
        <title>The genome of Syntrophus aciditrophicus: life at the thermodynamic limit of microbial growth.</title>
        <authorList>
            <person name="McInerney M.J."/>
            <person name="Rohlin L."/>
            <person name="Mouttaki H."/>
            <person name="Kim U."/>
            <person name="Krupp R.S."/>
            <person name="Rios-Hernandez L."/>
            <person name="Sieber J."/>
            <person name="Struchtemeyer C.G."/>
            <person name="Bhattacharyya A."/>
            <person name="Campbell J.W."/>
            <person name="Gunsalus R.P."/>
        </authorList>
    </citation>
    <scope>NUCLEOTIDE SEQUENCE [LARGE SCALE GENOMIC DNA]</scope>
    <source>
        <strain>SB</strain>
    </source>
</reference>
<feature type="chain" id="PRO_0000266426" description="Guanylate kinase">
    <location>
        <begin position="1"/>
        <end position="207"/>
    </location>
</feature>
<feature type="domain" description="Guanylate kinase-like" evidence="1">
    <location>
        <begin position="10"/>
        <end position="187"/>
    </location>
</feature>
<feature type="binding site" evidence="1">
    <location>
        <begin position="17"/>
        <end position="24"/>
    </location>
    <ligand>
        <name>ATP</name>
        <dbReference type="ChEBI" id="CHEBI:30616"/>
    </ligand>
</feature>
<gene>
    <name evidence="1" type="primary">gmk</name>
    <name type="ordered locus">SYNAS_02760</name>
    <name type="ORF">SYN_01279</name>
</gene>
<proteinExistence type="inferred from homology"/>
<evidence type="ECO:0000255" key="1">
    <source>
        <dbReference type="HAMAP-Rule" id="MF_00328"/>
    </source>
</evidence>
<keyword id="KW-0067">ATP-binding</keyword>
<keyword id="KW-0963">Cytoplasm</keyword>
<keyword id="KW-0418">Kinase</keyword>
<keyword id="KW-0547">Nucleotide-binding</keyword>
<keyword id="KW-1185">Reference proteome</keyword>
<keyword id="KW-0808">Transferase</keyword>
<name>KGUA_SYNAS</name>
<accession>Q2LQ62</accession>
<organism>
    <name type="scientific">Syntrophus aciditrophicus (strain SB)</name>
    <dbReference type="NCBI Taxonomy" id="56780"/>
    <lineage>
        <taxon>Bacteria</taxon>
        <taxon>Pseudomonadati</taxon>
        <taxon>Thermodesulfobacteriota</taxon>
        <taxon>Syntrophia</taxon>
        <taxon>Syntrophales</taxon>
        <taxon>Syntrophaceae</taxon>
        <taxon>Syntrophus</taxon>
    </lineage>
</organism>
<comment type="function">
    <text evidence="1">Essential for recycling GMP and indirectly, cGMP.</text>
</comment>
<comment type="catalytic activity">
    <reaction evidence="1">
        <text>GMP + ATP = GDP + ADP</text>
        <dbReference type="Rhea" id="RHEA:20780"/>
        <dbReference type="ChEBI" id="CHEBI:30616"/>
        <dbReference type="ChEBI" id="CHEBI:58115"/>
        <dbReference type="ChEBI" id="CHEBI:58189"/>
        <dbReference type="ChEBI" id="CHEBI:456216"/>
        <dbReference type="EC" id="2.7.4.8"/>
    </reaction>
</comment>
<comment type="subcellular location">
    <subcellularLocation>
        <location evidence="1">Cytoplasm</location>
    </subcellularLocation>
</comment>
<comment type="similarity">
    <text evidence="1">Belongs to the guanylate kinase family.</text>
</comment>
<sequence>MNKAGQEARGFFIVLSAASGTGKTSIRRIFLERCPEVQFSVSYTTRTARPGEVDGQDYFFVTETDFRERIDQGEFAEWEENYGRYYGTSGKVMTRVLEQGRDMILDIEPRGAKTLKKNYQGGIYVFVLPPSLAELKARLRKRGESEAEIRKRLDKVREEIAEARGYDYVIFNDSLEKAVERLQVIYQAEKSRASRMSKQIQGVLDSE</sequence>
<dbReference type="EC" id="2.7.4.8" evidence="1"/>
<dbReference type="EMBL" id="CP000252">
    <property type="protein sequence ID" value="ABC76155.1"/>
    <property type="molecule type" value="Genomic_DNA"/>
</dbReference>
<dbReference type="RefSeq" id="WP_011416189.1">
    <property type="nucleotide sequence ID" value="NC_007759.1"/>
</dbReference>
<dbReference type="SMR" id="Q2LQ62"/>
<dbReference type="FunCoup" id="Q2LQ62">
    <property type="interactions" value="426"/>
</dbReference>
<dbReference type="STRING" id="56780.SYN_01279"/>
<dbReference type="KEGG" id="sat:SYN_01279"/>
<dbReference type="eggNOG" id="COG0194">
    <property type="taxonomic scope" value="Bacteria"/>
</dbReference>
<dbReference type="HOGENOM" id="CLU_001715_1_2_7"/>
<dbReference type="InParanoid" id="Q2LQ62"/>
<dbReference type="OrthoDB" id="9808150at2"/>
<dbReference type="Proteomes" id="UP000001933">
    <property type="component" value="Chromosome"/>
</dbReference>
<dbReference type="GO" id="GO:0005829">
    <property type="term" value="C:cytosol"/>
    <property type="evidence" value="ECO:0007669"/>
    <property type="project" value="TreeGrafter"/>
</dbReference>
<dbReference type="GO" id="GO:0005524">
    <property type="term" value="F:ATP binding"/>
    <property type="evidence" value="ECO:0007669"/>
    <property type="project" value="UniProtKB-UniRule"/>
</dbReference>
<dbReference type="GO" id="GO:0004385">
    <property type="term" value="F:guanylate kinase activity"/>
    <property type="evidence" value="ECO:0007669"/>
    <property type="project" value="UniProtKB-UniRule"/>
</dbReference>
<dbReference type="CDD" id="cd00071">
    <property type="entry name" value="GMPK"/>
    <property type="match status" value="1"/>
</dbReference>
<dbReference type="FunFam" id="3.30.63.10:FF:000002">
    <property type="entry name" value="Guanylate kinase 1"/>
    <property type="match status" value="1"/>
</dbReference>
<dbReference type="Gene3D" id="3.30.63.10">
    <property type="entry name" value="Guanylate Kinase phosphate binding domain"/>
    <property type="match status" value="1"/>
</dbReference>
<dbReference type="Gene3D" id="3.40.50.300">
    <property type="entry name" value="P-loop containing nucleotide triphosphate hydrolases"/>
    <property type="match status" value="1"/>
</dbReference>
<dbReference type="HAMAP" id="MF_00328">
    <property type="entry name" value="Guanylate_kinase"/>
    <property type="match status" value="1"/>
</dbReference>
<dbReference type="InterPro" id="IPR008145">
    <property type="entry name" value="GK/Ca_channel_bsu"/>
</dbReference>
<dbReference type="InterPro" id="IPR008144">
    <property type="entry name" value="Guanylate_kin-like_dom"/>
</dbReference>
<dbReference type="InterPro" id="IPR017665">
    <property type="entry name" value="Guanylate_kinase"/>
</dbReference>
<dbReference type="InterPro" id="IPR020590">
    <property type="entry name" value="Guanylate_kinase_CS"/>
</dbReference>
<dbReference type="InterPro" id="IPR027417">
    <property type="entry name" value="P-loop_NTPase"/>
</dbReference>
<dbReference type="NCBIfam" id="TIGR03263">
    <property type="entry name" value="guanyl_kin"/>
    <property type="match status" value="1"/>
</dbReference>
<dbReference type="PANTHER" id="PTHR23117:SF13">
    <property type="entry name" value="GUANYLATE KINASE"/>
    <property type="match status" value="1"/>
</dbReference>
<dbReference type="PANTHER" id="PTHR23117">
    <property type="entry name" value="GUANYLATE KINASE-RELATED"/>
    <property type="match status" value="1"/>
</dbReference>
<dbReference type="Pfam" id="PF00625">
    <property type="entry name" value="Guanylate_kin"/>
    <property type="match status" value="1"/>
</dbReference>
<dbReference type="SMART" id="SM00072">
    <property type="entry name" value="GuKc"/>
    <property type="match status" value="1"/>
</dbReference>
<dbReference type="SUPFAM" id="SSF52540">
    <property type="entry name" value="P-loop containing nucleoside triphosphate hydrolases"/>
    <property type="match status" value="1"/>
</dbReference>
<dbReference type="PROSITE" id="PS00856">
    <property type="entry name" value="GUANYLATE_KINASE_1"/>
    <property type="match status" value="1"/>
</dbReference>
<dbReference type="PROSITE" id="PS50052">
    <property type="entry name" value="GUANYLATE_KINASE_2"/>
    <property type="match status" value="1"/>
</dbReference>